<comment type="function">
    <text evidence="2 3">Multifunctional transcription factor that induces cell cycle arrest, DNA repair or apoptosis upon binding to its target DNA sequence. Acts as a tumor suppressor in many tumor types; induces growth arrest or apoptosis depending on the physiological circumstances and cell type. Negatively regulates cell division by controlling expression of a set of genes required for this process. One of the activated genes is an inhibitor of cyclin-dependent kinases. Apoptosis induction seems to be mediated either by stimulation of BAX and FAS antigen expression, or by repression of Bcl-2 expression. Its pro-apoptotic activity is activated via its interaction with PPP1R13B/ASPP1 or TP53BP2/ASPP2 (By similarity). However, this activity is inhibited when the interaction with PPP1R13B/ASPP1 or TP53BP2/ASPP2 is displaced by PPP1R13L/iASPP (By similarity). In cooperation with mitochondrial PPIF is involved in activating oxidative stress-induced necrosis; the function is largely independent of transcription. Prevents CDK7 kinase activity when associated to CAK complex in response to DNA damage, thus stopping cell cycle progression. Induces the transcription of long intergenic non-coding RNA p21 (lincRNA-p21) and lincRNA-Mkln1. LincRNA-p21 participates in TP53-dependent transcriptional repression leading to apoptosis and seems to have an effect on cell-cycle regulation. Regulates the circadian clock by repressing CLOCK-ARNTL/BMAL1-mediated transcriptional activation of PER2.</text>
</comment>
<comment type="cofactor">
    <cofactor evidence="1">
        <name>Zn(2+)</name>
        <dbReference type="ChEBI" id="CHEBI:29105"/>
    </cofactor>
    <text evidence="1">Binds 1 zinc ion per subunit.</text>
</comment>
<comment type="subunit">
    <text evidence="2 3 4">Forms homodimers and homotetramers (By similarity). Binds DNA as a homotetramer. Interacts with AXIN1. Probably part of a complex consisting of TP53, HIPK2 and AXIN1. Interacts with histone acetyltransferases EP300 and methyltransferases HRMT1L2 and CARM1, and recruits them to promoters. Interacts (via C-terminus) with TAF1; when TAF1 is part of the TFIID complex. Interacts with ING4; this interaction may be indirect. Found in a complex with CABLES1 and TP73. Interacts with HIPK1, HIPK2, and TP53INP1. Interacts with WWOX. Interacts with USP7 and SYVN1. Interacts with HSP90AB1. Interacts with CHD8; leading to recruit histone H1 and prevent transactivation activity. Interacts with ARMC10, BANP, CDKN2AIP, NUAK1, STK11/LKB1, UHRF2 and E4F. Interacts with YWHAZ; the interaction enhances TP53 transcriptional activity. Phosphorylation of YWHAZ on 'Ser-58' inhibits this interaction. Interacts (via DNA-binding domain) with MAML1 (via N-terminus). Interacts with MKRN1. Interacts with PML (via C-terminus). Interacts with MDM2; leading to ubiquitination and proteasomal degradation of TP53. Directly interacts with FBXO42; leading to ubiquitination and degradation of TP53. Interacts (phosphorylated at Ser-15 by ATM) with the phosphatase PP2A-PPP2R5C holoenzyme; regulates stress-induced TP53-dependent inhibition of cell proliferation. Interacts with PPP2R2A. Interacts with AURKA, DAXX, BRD7 and TRIM24. Interacts (when monomethylated at Lys-375) with L3MBTL1. Interacts with GRK5. Binds to the CAK complex (CDK7, cyclin H and MAT1) in response to DNA damage. Interacts with CDK5 in neurons. Interacts with AURKB, SETD2, UHRF2 and NOC2L. Interacts (via N-terminus) with PTK2/FAK1; this promotes ubiquitination by MDM2. Interacts with PTK2B/PYK2; this promotes ubiquitination by MDM2. Interacts with PRKCG. Interacts with PPIF; the association implicates preferentially tetrameric TP53, is induced by oxidative stress and is impaired by cyclosporin A (CsA). Interacts with SNAI1; the interaction induces SNAI1 degradation via MDM2-mediated ubiquitination and inhibits SNAI1-induced cell invasion. Interacts with UBC9. Interacts with ZNF385B; the interaction is direct. Interacts (via DNA-binding domain) with ZNF385A; the interaction is direct and enhances p53/TP53 transactivation functions on cell-cycle arrest target genes, resulting in growth arrest (By similarity). Interacts with ANKRD2. Interacts with RFFL and RNF34; involved in p53/TP53 ubiquitination. Interacts with MTA1 and COP1. Interacts with CCAR2 (via N-terminus). Interacts with MORC3. Interacts (via C-terminus) with POU4F2 (via C-terminus). Interacts (via oligomerization region) with NOP53; the interaction is direct and may prevent the MDM2-mediated proteasomal degradation of TP53. Interacts with AFG1L; mediates mitochondrial translocation of TP53. Interacts with UBD (By similarity). Interacts with TAF6 (By similarity). Interacts with C10orf90/FATS; the interaction inhibits binding of TP53 and MDM2 (By similarity). Interacts with NUPR1; interaction is stress-dependent. Forms a complex with EP300 and NUPR1; this complex binds CDKN1A promoter leading to transcriptional induction of CDKN1A (By similarity). Interacts with PRMT5 in response to DNA damage; the interaction is TTC5/STRAP dependent (By similarity). Interacts with PPP1R13L (via SH3 domain and ANK repeats); the interaction inhibits pro-apoptotic activity of p53/TP53 (By similarity). Interacts with PPP1R13B/ASPP1 and TP53BP2/ASPP2; the interactions promotes pro-apoptotic activity (By similarity). When phosphorylated at Ser-15, interacts with DDX3X and gamma-tubulin (By similarity). Interacts with KAT7/HBO1; leading to inhibit histone acetyltransferase activity of KAT7/HBO1 (By similarity). Interacts (via N-terminus) with E3 ubiquitin-protein ligase MUL1; the interaction results in ubiquitination of cytoplasmic TP53 at Lys-24 and subsequent proteasomal degradation (By similarity). Interacts with S100A4; this interaction promotes TP53 degradation (By similarity). Interacts with TTC5/STRAP; the interaction may result in increased mitochondrial-dependent apoptosis (By similarity). Interacts with NQO1; this interaction is NADH-dependent, stabilizes TP53 in response to oxidative stress and protects it from ubiquitin-independent degradation by the 20S proteasome (By similarity). Interacts with DAZAP2 at TP53 target gene promoters; the interaction is triggered by DNA damage and leads to modulation of the expression of a subset of TP53 target genes, reducing DNA damage-induced cell death by limiting the expression of cell death-mediating TP53 target genes (By similarity). Interacts (via N-terminus) with ZNF768 (via zinc-finger domains); interaction might be facilitated by TP53 oligomerization state (By similarity). Forms a ternary complex with ALDOB and G6PD; this interaction is direct. ALDOB stabilizes the complex inhibiting G6PD activity and keeping oxidative pentose phosphate metabolism in check. Interacts with MORN3; the interactions mediate post-transcriptional modifications of TP53 by MDM2 and SIRT1 (By similarity). Interacts with HSPA9/MOT-2; the interaction promotes the degradation of TP53 (By similarity). Interacts with FBXO22; this interaction promotes TP53 proteasomal degradation (By similarity).</text>
</comment>
<comment type="subcellular location">
    <subcellularLocation>
        <location evidence="3">Cytoplasm</location>
    </subcellularLocation>
    <subcellularLocation>
        <location evidence="3">Nucleus</location>
    </subcellularLocation>
    <subcellularLocation>
        <location evidence="3">Nucleus</location>
        <location evidence="3">PML body</location>
    </subcellularLocation>
    <subcellularLocation>
        <location evidence="3">Endoplasmic reticulum</location>
    </subcellularLocation>
    <subcellularLocation>
        <location evidence="3">Mitochondrion matrix</location>
    </subcellularLocation>
    <subcellularLocation>
        <location evidence="3">Cytoplasm</location>
        <location evidence="3">Cytoskeleton</location>
        <location evidence="3">Microtubule organizing center</location>
        <location evidence="3">Centrosome</location>
    </subcellularLocation>
    <text evidence="3">Interaction with BANP promotes nuclear localization. Recruited into PML bodies together with CHEK2. Translocates to mitochondria upon oxidative stress. Translocates to mitochondria in response to mitomycin C treatment (By similarity). Competitive inhibition of TP53 interaction with HSPA9/MOT-2 by UBXN2A results in increased protein abundance and subsequent translocation of TP53 to the nucleus (By similarity).</text>
</comment>
<comment type="domain">
    <text evidence="3">The N-terminal and C-terminal disordered regions undergo liquid-liquid phase separation (LLPS) following homotetramerization and activation. Post-translational modifications, such as phosphorylation or lactylation affect the ability to undergo LLPS.</text>
</comment>
<comment type="domain">
    <text evidence="3">The nuclear export signal acts as a transcriptional repression domain. The TADI and TADII motifs (residues 17 to 25 and 48 to 56) correspond both to 9aaTAD motifs which are transactivation domains present in a large number of yeast and animal transcription factors.</text>
</comment>
<comment type="PTM">
    <text evidence="1 3">Phosphorylation on Ser residues mediates transcriptional activation. Phosphorylated on Thr-18 by VRK1, which may prevent the interaction with MDM2. Phosphorylated on Ser-20 by CHEK2 in response to DNA damage, which prevents ubiquitination by MDM2. Phosphorylated on Ser-20 by PLK3 in response to reactive oxygen species (ROS), promoting p53/TP53-mediated apoptosis. Phosphorylated on Ser-33 by CDK7 in a CAK complex in response to DNA damage. Phosphorylated by HIPK1. Phosphorylated on Ser-385 following UV but not gamma irradiation. Stabilized by CDK5-mediated phosphorylation in response to genotoxic and oxidative stresses at Ser-15, Ser-33 and Ser-47, leading to accumulation of p53/TP53, particularly in the nucleus, thus inducing the transactivation of p53/TP53 target genes. Phosphorylated by DYRK2 at Ser-47 in response to genotoxic stress. Phosphorylated at Ser-308 and Ser-385 by CDK2 in response to DNA-damage (By similarity). Phosphorylation at Ser-15 is required for interaction with DDX3X and gamma-tubulin (By similarity). Phosphorylation at Ser-385 regulates its ability to undergo liquid-liquid phase separation by increasing fluidity of TP53/p53 condensates (By similarity).</text>
</comment>
<comment type="PTM">
    <text evidence="3">Monomethylated at Lys-365 by SETD7, leading to stabilization and increased transcriptional activation. Monomethylated at Lys-363 by SMYD2, leading to decreased DNA-binding activity and subsequent transcriptional regulation activity. Lys-365 monomethylation prevents interaction with SMYD2 and subsequent monomethylation at Lys-363. Dimethylated at Lys-366 by EHMT1 and EHMT2. Monomethylated at Lys-375 by KMT5A, promoting interaction with L3MBTL1 and leading to repress transcriptional activity. Demethylation of dimethylated Lys-363 by KDM1A prevents interaction with TP53BP1 and represses TP53-mediated transcriptional activation (By similarity). Monomethylated at Arg-326 and dimethylated at Arg-328 and Arg-330 by PRMT5; methylation is increased after DNA damage and might possibly affect TP53 target gene specificity (By similarity).</text>
</comment>
<comment type="PTM">
    <text evidence="1">Sumoylated with SUMO1. Sumoylated at Lys-379 by UBC9 (By similarity).</text>
</comment>
<comment type="PTM">
    <text evidence="2 3">Ubiquitinated by MDM2 and SYVN1, which leads to proteasomal degradation. Ubiquitinated by RFWD3, which works in cooperation with MDM2 and may catalyze the formation of short polyubiquitin chains on p53/TP53 that are not targeted to the proteasome. Ubiquitinated by MKRN1, which leads to proteasomal degradation. Deubiquitinated by USP10, leading to stabilize it. Ubiquitinated by TRIM24, RFFL, RNF34 and RNF125, which leads to proteasomal degradation. Ubiquitination by TOPORS induces degradation. Deubiquitination by USP7, leading to stabilize it. Ubiquitinated by COP1, which leads to proteasomal degradation (By similarity). Ubiquitination and subsequent proteasomal degradation is negatively regulated by CCAR2 (By similarity). Polyubiquitinated by C10orf90/FATS, polyubiquitination is 'Lys-48'-linkage independent and non-proteolytic, leading to TP53 stabilization (By similarity). Polyubiquitinated by MUL1 at Lys-24 which leads to proteasomal degradation (By similarity). Deubiquitinated by USP3, leading to stabilization (By similarity). Ubiquitinated by MSL2, promoting its cytoplasmic localization (By similarity). Also ubiquitinated by the SCF(FBXO22)-KDMA4A complex; leading to proteasomal degradation (By similarity).</text>
</comment>
<comment type="PTM">
    <text evidence="3">Acetylation of Lys-375 by CREBBP enhances transcriptional activity. Acetylation of Lys-375 by EP300. Deacetylation of Lys-375 by SIRT1 impairs its ability to induce proapoptotic program and modulate cell senescence. Deacetylation by SIRT2 impairs its ability to induce transcription activation in a AKT-dependent manner. Acetylation at Lys-374 increases stability. Deacetylation at Lys-374 by SIRT6 decreases its stability, thereby regulating cell senescence. Acetylated at Lys-112 by KAT5, KAT6A and KAT8; regulating its ability to induce proapoptotic program.</text>
</comment>
<comment type="PTM">
    <text evidence="3">Lactylation by AARS1 prevents ability to undergo liquid-liquid phase separation (LLPS), thereby inhibiting transcription factor activity.</text>
</comment>
<comment type="disease">
    <text>p53 is found in increased amounts in a wide variety of transformed cells. p53 is frequently mutated or inactivated in many types of cancer.</text>
</comment>
<comment type="similarity">
    <text evidence="6">Belongs to the p53 family.</text>
</comment>
<proteinExistence type="evidence at transcript level"/>
<sequence>MEESQSELGVEPPLSQETFSDLWKLLPENNLLSSELSLAAVNDLLLSPVTNWLDENPDDASRVPAPPAATAPAPAAPAPATSWPLSSFVPSQKTYPGSYDFRLGFLHSGTAKSVTCTYSPALNKLFCQLAKTCPVQLWVSSPPPPGTRVRAMAIYKKSEYMTEVVRRCPHHERSSDYSDGLAPPQHLIRVEGNLRAEYLDDRNTFRHSVVVPYEPPEVGSDCTTIHYNFMCNSSCMGGMNRRPILTIITLEDASGNLLGRNSFEVRVCACPGRDRRTEEENFLKKGQSCPEPPPGSTKRALPTSTSSSPVQKKKPLDGEYFTLQIRGRERFEMFRELNDALELKDAQTARESGENRAHSSHLKSKKGQSPSRHKKPMFKREGPDSD</sequence>
<reference key="1">
    <citation type="journal article" date="1999" name="Oncogene">
        <title>Nucleotide sequence of the porcine p53 cDNA, and the detection of recombinant porcine p53 expressed in vitro with a variety of anti-p53 antibodies.</title>
        <authorList>
            <person name="Burr P.D."/>
            <person name="Argyle D.J."/>
            <person name="Reid S.W.J."/>
            <person name="Nasir L."/>
        </authorList>
    </citation>
    <scope>NUCLEOTIDE SEQUENCE [MRNA]</scope>
</reference>
<feature type="chain" id="PRO_0000185710" description="Cellular tumor antigen p53">
    <location>
        <begin position="1"/>
        <end position="386"/>
    </location>
</feature>
<feature type="DNA-binding region" evidence="3">
    <location>
        <begin position="94"/>
        <end position="285"/>
    </location>
</feature>
<feature type="region of interest" description="Interaction with CCAR2" evidence="3">
    <location>
        <begin position="1"/>
        <end position="313"/>
    </location>
</feature>
<feature type="region of interest" description="Transcription activation (acidic)">
    <location>
        <begin position="1"/>
        <end position="45"/>
    </location>
</feature>
<feature type="region of interest" description="Disordered" evidence="5">
    <location>
        <begin position="57"/>
        <end position="76"/>
    </location>
</feature>
<feature type="region of interest" description="Interaction with WWOX" evidence="1">
    <location>
        <begin position="63"/>
        <end position="102"/>
    </location>
</feature>
<feature type="region of interest" description="Interaction with HIPK1" evidence="1">
    <location>
        <begin position="92"/>
        <end position="363"/>
    </location>
</feature>
<feature type="region of interest" description="Required for interaction with ZNF385A" evidence="1">
    <location>
        <begin position="92"/>
        <end position="293"/>
    </location>
</feature>
<feature type="region of interest" description="Required for interaction with FBXO42" evidence="1">
    <location>
        <begin position="105"/>
        <end position="229"/>
    </location>
</feature>
<feature type="region of interest" description="Interaction with AXIN1" evidence="1">
    <location>
        <begin position="108"/>
        <end position="285"/>
    </location>
</feature>
<feature type="region of interest" description="Interaction with E4F1" evidence="1">
    <location>
        <begin position="249"/>
        <end position="287"/>
    </location>
</feature>
<feature type="region of interest" description="Interaction with DNA" evidence="1">
    <location>
        <begin position="266"/>
        <end position="273"/>
    </location>
</feature>
<feature type="region of interest" description="Disordered" evidence="5">
    <location>
        <begin position="279"/>
        <end position="315"/>
    </location>
</feature>
<feature type="region of interest" description="Interaction with HIPK2" evidence="1">
    <location>
        <begin position="312"/>
        <end position="353"/>
    </location>
</feature>
<feature type="region of interest" description="Oligomerization">
    <location>
        <begin position="318"/>
        <end position="349"/>
    </location>
</feature>
<feature type="region of interest" description="Disordered" evidence="5">
    <location>
        <begin position="345"/>
        <end position="386"/>
    </location>
</feature>
<feature type="region of interest" description="Interaction with USP7" evidence="1">
    <location>
        <begin position="352"/>
        <end position="356"/>
    </location>
</feature>
<feature type="region of interest" description="Basic (repression of DNA-binding)">
    <location>
        <begin position="361"/>
        <end position="380"/>
    </location>
</feature>
<feature type="short sequence motif" description="Bipartite nuclear localization signal" evidence="1">
    <location>
        <begin position="298"/>
        <end position="314"/>
    </location>
</feature>
<feature type="short sequence motif" description="Nuclear export signal" evidence="1">
    <location>
        <begin position="332"/>
        <end position="343"/>
    </location>
</feature>
<feature type="short sequence motif" description="[KR]-[STA]-K motif">
    <location>
        <begin position="363"/>
        <end position="365"/>
    </location>
</feature>
<feature type="compositionally biased region" description="Pro residues" evidence="5">
    <location>
        <begin position="64"/>
        <end position="76"/>
    </location>
</feature>
<feature type="compositionally biased region" description="Basic and acidic residues" evidence="5">
    <location>
        <begin position="345"/>
        <end position="357"/>
    </location>
</feature>
<feature type="compositionally biased region" description="Basic residues" evidence="5">
    <location>
        <begin position="358"/>
        <end position="377"/>
    </location>
</feature>
<feature type="binding site" evidence="3">
    <location>
        <position position="168"/>
    </location>
    <ligand>
        <name>Zn(2+)</name>
        <dbReference type="ChEBI" id="CHEBI:29105"/>
    </ligand>
</feature>
<feature type="binding site" evidence="3">
    <location>
        <position position="171"/>
    </location>
    <ligand>
        <name>Zn(2+)</name>
        <dbReference type="ChEBI" id="CHEBI:29105"/>
    </ligand>
</feature>
<feature type="binding site" evidence="3">
    <location>
        <position position="231"/>
    </location>
    <ligand>
        <name>Zn(2+)</name>
        <dbReference type="ChEBI" id="CHEBI:29105"/>
    </ligand>
</feature>
<feature type="binding site" evidence="3">
    <location>
        <position position="235"/>
    </location>
    <ligand>
        <name>Zn(2+)</name>
        <dbReference type="ChEBI" id="CHEBI:29105"/>
    </ligand>
</feature>
<feature type="site" description="Interaction with DNA" evidence="3">
    <location>
        <position position="112"/>
    </location>
</feature>
<feature type="modified residue" description="Phosphoserine; by CDK5, PRPK, AMPK, NUAK1 and ATM" evidence="3">
    <location>
        <position position="15"/>
    </location>
</feature>
<feature type="modified residue" description="Phosphothreonine; by CK1, VRK1 and VRK2" evidence="3">
    <location>
        <position position="18"/>
    </location>
</feature>
<feature type="modified residue" description="Phosphoserine; by CHEK2, CK1 and PLK3" evidence="3">
    <location>
        <position position="20"/>
    </location>
</feature>
<feature type="modified residue" description="Phosphoserine; by CDK5 and CDK7" evidence="3">
    <location>
        <position position="33"/>
    </location>
</feature>
<feature type="modified residue" description="Phosphoserine; by MAPKAPK5" evidence="3">
    <location>
        <position position="37"/>
    </location>
</feature>
<feature type="modified residue" description="Phosphoserine; by CDK5, DYRK2, HIPK2 and PKC/PRKCG" evidence="3">
    <location>
        <position position="47"/>
    </location>
</feature>
<feature type="modified residue" description="N6-acetyllysine" evidence="3">
    <location>
        <position position="112"/>
    </location>
</feature>
<feature type="modified residue" description="N6-lactoyllysine" evidence="3">
    <location>
        <position position="112"/>
    </location>
</feature>
<feature type="modified residue" description="N6-lactoyllysine" evidence="3">
    <location>
        <position position="131"/>
    </location>
</feature>
<feature type="modified residue" description="Phosphoserine; by AURKB" evidence="3">
    <location>
        <position position="175"/>
    </location>
</feature>
<feature type="modified residue" description="Phosphoserine; by AURKB" evidence="3">
    <location>
        <position position="262"/>
    </location>
</feature>
<feature type="modified residue" description="Phosphothreonine; by AURKB" evidence="3">
    <location>
        <position position="277"/>
    </location>
</feature>
<feature type="modified residue" description="N6-acetyllysine" evidence="3">
    <location>
        <position position="298"/>
    </location>
</feature>
<feature type="modified residue" description="Phosphoserine; by AURKA, CDK1 and CDK2" evidence="3">
    <location>
        <position position="308"/>
    </location>
</feature>
<feature type="modified residue" description="N6-acetyllysine" evidence="2">
    <location>
        <position position="314"/>
    </location>
</feature>
<feature type="modified residue" description="Omega-N-methylarginine" evidence="3">
    <location>
        <position position="326"/>
    </location>
</feature>
<feature type="modified residue" description="Symmetric dimethylarginine" evidence="3">
    <location>
        <position position="328"/>
    </location>
</feature>
<feature type="modified residue" description="Symmetric dimethylarginine" evidence="3">
    <location>
        <position position="330"/>
    </location>
</feature>
<feature type="modified residue" description="N6,N6-dimethyllysine; alternate" evidence="3">
    <location>
        <position position="363"/>
    </location>
</feature>
<feature type="modified residue" description="N6-methyllysine; by SMYD2; alternate" evidence="3">
    <location>
        <position position="363"/>
    </location>
</feature>
<feature type="modified residue" description="N6-methyllysine; by SETD7" evidence="3">
    <location>
        <position position="365"/>
    </location>
</feature>
<feature type="modified residue" description="N6,N6-dimethyllysine; by EHMT1 and EHMT2; alternate" evidence="3">
    <location>
        <position position="366"/>
    </location>
</feature>
<feature type="modified residue" description="N6-acetyllysine; alternate" evidence="3">
    <location>
        <position position="366"/>
    </location>
</feature>
<feature type="modified residue" description="N6-acetyllysine" evidence="3">
    <location>
        <position position="374"/>
    </location>
</feature>
<feature type="modified residue" description="N6,N6-dimethyllysine; alternate" evidence="3">
    <location>
        <position position="375"/>
    </location>
</feature>
<feature type="modified residue" description="N6-acetyllysine; alternate" evidence="3">
    <location>
        <position position="375"/>
    </location>
</feature>
<feature type="modified residue" description="N6-methyllysine; by KMT5A; alternate" evidence="3">
    <location>
        <position position="375"/>
    </location>
</feature>
<feature type="modified residue" description="Phosphoserine; by CK2, CDK2 and NUAK1" evidence="3">
    <location>
        <position position="385"/>
    </location>
</feature>
<feature type="cross-link" description="Glycyl lysine isopeptide (Lys-Gly) (interchain with G-Cter in ubiquitin)" evidence="3">
    <location>
        <position position="24"/>
    </location>
</feature>
<feature type="cross-link" description="Glycyl lysine isopeptide (Lys-Gly) (interchain with G-Cter in ubiquitin)" evidence="3">
    <location>
        <position position="284"/>
    </location>
</feature>
<feature type="cross-link" description="Glycyl lysine isopeptide (Lys-Gly) (interchain with G-Cter in ubiquitin)" evidence="3">
    <location>
        <position position="285"/>
    </location>
</feature>
<feature type="cross-link" description="Glycyl lysine isopeptide (Lys-Gly) (interchain with G-Cter in ubiquitin)" evidence="3">
    <location>
        <position position="344"/>
    </location>
</feature>
<feature type="cross-link" description="Glycyl lysine isopeptide (Lys-Gly) (interchain with G-Cter in SUMO)" evidence="1">
    <location>
        <position position="379"/>
    </location>
</feature>
<gene>
    <name type="primary">TP53</name>
    <name type="synonym">P53</name>
</gene>
<keyword id="KW-0007">Acetylation</keyword>
<keyword id="KW-0010">Activator</keyword>
<keyword id="KW-0053">Apoptosis</keyword>
<keyword id="KW-0090">Biological rhythms</keyword>
<keyword id="KW-0131">Cell cycle</keyword>
<keyword id="KW-0963">Cytoplasm</keyword>
<keyword id="KW-0206">Cytoskeleton</keyword>
<keyword id="KW-0238">DNA-binding</keyword>
<keyword id="KW-0256">Endoplasmic reticulum</keyword>
<keyword id="KW-1017">Isopeptide bond</keyword>
<keyword id="KW-0479">Metal-binding</keyword>
<keyword id="KW-0488">Methylation</keyword>
<keyword id="KW-0496">Mitochondrion</keyword>
<keyword id="KW-1210">Necrosis</keyword>
<keyword id="KW-0539">Nucleus</keyword>
<keyword id="KW-0597">Phosphoprotein</keyword>
<keyword id="KW-1185">Reference proteome</keyword>
<keyword id="KW-0678">Repressor</keyword>
<keyword id="KW-0804">Transcription</keyword>
<keyword id="KW-0805">Transcription regulation</keyword>
<keyword id="KW-0043">Tumor suppressor</keyword>
<keyword id="KW-0832">Ubl conjugation</keyword>
<keyword id="KW-0862">Zinc</keyword>
<dbReference type="EMBL" id="AF098067">
    <property type="protein sequence ID" value="AAF04620.1"/>
    <property type="molecule type" value="mRNA"/>
</dbReference>
<dbReference type="RefSeq" id="NP_998989.3">
    <property type="nucleotide sequence ID" value="NM_213824.3"/>
</dbReference>
<dbReference type="SMR" id="Q9TUB2"/>
<dbReference type="BioGRID" id="1149408">
    <property type="interactions" value="5"/>
</dbReference>
<dbReference type="FunCoup" id="Q9TUB2">
    <property type="interactions" value="1737"/>
</dbReference>
<dbReference type="STRING" id="9823.ENSSSCP00000050664"/>
<dbReference type="iPTMnet" id="Q9TUB2"/>
<dbReference type="PaxDb" id="9823-ENSSSCP00000019016"/>
<dbReference type="Ensembl" id="ENSSSCT00000019534.5">
    <property type="protein sequence ID" value="ENSSSCP00000019016.2"/>
    <property type="gene ID" value="ENSSSCG00000017950.5"/>
</dbReference>
<dbReference type="Ensembl" id="ENSSSCT00015048254.1">
    <property type="protein sequence ID" value="ENSSSCP00015019171.1"/>
    <property type="gene ID" value="ENSSSCG00015036126.1"/>
</dbReference>
<dbReference type="Ensembl" id="ENSSSCT00035067627.1">
    <property type="protein sequence ID" value="ENSSSCP00035027397.1"/>
    <property type="gene ID" value="ENSSSCG00035050744.1"/>
</dbReference>
<dbReference type="Ensembl" id="ENSSSCT00040021964.1">
    <property type="protein sequence ID" value="ENSSSCP00040009175.1"/>
    <property type="gene ID" value="ENSSSCG00040016253.1"/>
</dbReference>
<dbReference type="Ensembl" id="ENSSSCT00045058698.1">
    <property type="protein sequence ID" value="ENSSSCP00045041049.1"/>
    <property type="gene ID" value="ENSSSCG00045034213.1"/>
</dbReference>
<dbReference type="Ensembl" id="ENSSSCT00050009065.1">
    <property type="protein sequence ID" value="ENSSSCP00050003862.1"/>
    <property type="gene ID" value="ENSSSCG00050006598.1"/>
</dbReference>
<dbReference type="Ensembl" id="ENSSSCT00055030523.1">
    <property type="protein sequence ID" value="ENSSSCP00055024300.1"/>
    <property type="gene ID" value="ENSSSCG00055015386.1"/>
</dbReference>
<dbReference type="Ensembl" id="ENSSSCT00060073506.1">
    <property type="protein sequence ID" value="ENSSSCP00060031704.1"/>
    <property type="gene ID" value="ENSSSCG00060053915.1"/>
</dbReference>
<dbReference type="Ensembl" id="ENSSSCT00065067435.1">
    <property type="protein sequence ID" value="ENSSSCP00065029318.1"/>
    <property type="gene ID" value="ENSSSCG00065049233.1"/>
</dbReference>
<dbReference type="Ensembl" id="ENSSSCT00090011860">
    <property type="protein sequence ID" value="ENSSSCP00090007505"/>
    <property type="gene ID" value="ENSSSCG00090006714"/>
</dbReference>
<dbReference type="Ensembl" id="ENSSSCT00115028337">
    <property type="protein sequence ID" value="ENSSSCP00115026873"/>
    <property type="gene ID" value="ENSSSCG00115016173"/>
</dbReference>
<dbReference type="Ensembl" id="ENSSSCT00130051255">
    <property type="protein sequence ID" value="ENSSSCP00130036460"/>
    <property type="gene ID" value="ENSSSCG00130026322"/>
</dbReference>
<dbReference type="GeneID" id="397276"/>
<dbReference type="KEGG" id="ssc:397276"/>
<dbReference type="CTD" id="7157"/>
<dbReference type="VGNC" id="VGNC:94324">
    <property type="gene designation" value="TP53"/>
</dbReference>
<dbReference type="eggNOG" id="ENOG502QVY3">
    <property type="taxonomic scope" value="Eukaryota"/>
</dbReference>
<dbReference type="GeneTree" id="ENSGT00950000183153"/>
<dbReference type="InParanoid" id="Q9TUB2"/>
<dbReference type="OrthoDB" id="5915660at2759"/>
<dbReference type="TreeFam" id="TF106101"/>
<dbReference type="Reactome" id="R-SSC-2559580">
    <property type="pathway name" value="Oxidative Stress Induced Senescence"/>
</dbReference>
<dbReference type="Reactome" id="R-SSC-2559584">
    <property type="pathway name" value="Formation of Senescence-Associated Heterochromatin Foci (SAHF)"/>
</dbReference>
<dbReference type="Reactome" id="R-SSC-2559586">
    <property type="pathway name" value="DNA Damage/Telomere Stress Induced Senescence"/>
</dbReference>
<dbReference type="Reactome" id="R-SSC-349425">
    <property type="pathway name" value="Autodegradation of the E3 ubiquitin ligase COP1"/>
</dbReference>
<dbReference type="Reactome" id="R-SSC-5689880">
    <property type="pathway name" value="Ub-specific processing proteases"/>
</dbReference>
<dbReference type="Reactome" id="R-SSC-5689896">
    <property type="pathway name" value="Ovarian tumor domain proteases"/>
</dbReference>
<dbReference type="Reactome" id="R-SSC-5693565">
    <property type="pathway name" value="Recruitment and ATM-mediated phosphorylation of repair and signaling proteins at DNA double strand breaks"/>
</dbReference>
<dbReference type="Reactome" id="R-SSC-6804754">
    <property type="pathway name" value="Regulation of TP53 Expression"/>
</dbReference>
<dbReference type="Reactome" id="R-SSC-6804756">
    <property type="pathway name" value="Regulation of TP53 Activity through Phosphorylation"/>
</dbReference>
<dbReference type="Reactome" id="R-SSC-6804757">
    <property type="pathway name" value="Regulation of TP53 Degradation"/>
</dbReference>
<dbReference type="Reactome" id="R-SSC-6804758">
    <property type="pathway name" value="Regulation of TP53 Activity through Acetylation"/>
</dbReference>
<dbReference type="Reactome" id="R-SSC-6804759">
    <property type="pathway name" value="Regulation of TP53 Activity through Association with Co-factors"/>
</dbReference>
<dbReference type="Reactome" id="R-SSC-6804760">
    <property type="pathway name" value="Regulation of TP53 Activity through Methylation"/>
</dbReference>
<dbReference type="Reactome" id="R-SSC-6811555">
    <property type="pathway name" value="PI5P Regulates TP53 Acetylation"/>
</dbReference>
<dbReference type="Reactome" id="R-SSC-69473">
    <property type="pathway name" value="G2/M DNA damage checkpoint"/>
</dbReference>
<dbReference type="Reactome" id="R-SSC-69481">
    <property type="pathway name" value="G2/M Checkpoints"/>
</dbReference>
<dbReference type="Reactome" id="R-SSC-69541">
    <property type="pathway name" value="Stabilization of p53"/>
</dbReference>
<dbReference type="Reactome" id="R-SSC-69895">
    <property type="pathway name" value="Transcriptional activation of cell cycle inhibitor p21"/>
</dbReference>
<dbReference type="Reactome" id="R-SSC-8852276">
    <property type="pathway name" value="The role of GTSE1 in G2/M progression after G2 checkpoint"/>
</dbReference>
<dbReference type="Reactome" id="R-SSC-8941855">
    <property type="pathway name" value="RUNX3 regulates CDKN1A transcription"/>
</dbReference>
<dbReference type="Reactome" id="R-SSC-9833482">
    <property type="pathway name" value="PKR-mediated signaling"/>
</dbReference>
<dbReference type="Proteomes" id="UP000008227">
    <property type="component" value="Chromosome 12"/>
</dbReference>
<dbReference type="Proteomes" id="UP000314985">
    <property type="component" value="Unplaced"/>
</dbReference>
<dbReference type="Proteomes" id="UP000694570">
    <property type="component" value="Unplaced"/>
</dbReference>
<dbReference type="Proteomes" id="UP000694571">
    <property type="component" value="Unplaced"/>
</dbReference>
<dbReference type="Proteomes" id="UP000694720">
    <property type="component" value="Unplaced"/>
</dbReference>
<dbReference type="Proteomes" id="UP000694722">
    <property type="component" value="Unplaced"/>
</dbReference>
<dbReference type="Proteomes" id="UP000694723">
    <property type="component" value="Unplaced"/>
</dbReference>
<dbReference type="Proteomes" id="UP000694724">
    <property type="component" value="Unplaced"/>
</dbReference>
<dbReference type="Proteomes" id="UP000694725">
    <property type="component" value="Unplaced"/>
</dbReference>
<dbReference type="Proteomes" id="UP000694726">
    <property type="component" value="Unplaced"/>
</dbReference>
<dbReference type="Proteomes" id="UP000694727">
    <property type="component" value="Unplaced"/>
</dbReference>
<dbReference type="Proteomes" id="UP000694728">
    <property type="component" value="Unplaced"/>
</dbReference>
<dbReference type="Bgee" id="ENSSSCG00000017950">
    <property type="expression patterns" value="Expressed in blood and 43 other cell types or tissues"/>
</dbReference>
<dbReference type="ExpressionAtlas" id="Q9TUB2">
    <property type="expression patterns" value="baseline and differential"/>
</dbReference>
<dbReference type="GO" id="GO:0005813">
    <property type="term" value="C:centrosome"/>
    <property type="evidence" value="ECO:0000250"/>
    <property type="project" value="UniProtKB"/>
</dbReference>
<dbReference type="GO" id="GO:0005737">
    <property type="term" value="C:cytoplasm"/>
    <property type="evidence" value="ECO:0000250"/>
    <property type="project" value="UniProtKB"/>
</dbReference>
<dbReference type="GO" id="GO:0005783">
    <property type="term" value="C:endoplasmic reticulum"/>
    <property type="evidence" value="ECO:0007669"/>
    <property type="project" value="UniProtKB-SubCell"/>
</dbReference>
<dbReference type="GO" id="GO:0005759">
    <property type="term" value="C:mitochondrial matrix"/>
    <property type="evidence" value="ECO:0007669"/>
    <property type="project" value="UniProtKB-SubCell"/>
</dbReference>
<dbReference type="GO" id="GO:0005739">
    <property type="term" value="C:mitochondrion"/>
    <property type="evidence" value="ECO:0000250"/>
    <property type="project" value="UniProtKB"/>
</dbReference>
<dbReference type="GO" id="GO:0005730">
    <property type="term" value="C:nucleolus"/>
    <property type="evidence" value="ECO:0000250"/>
    <property type="project" value="UniProtKB"/>
</dbReference>
<dbReference type="GO" id="GO:0005634">
    <property type="term" value="C:nucleus"/>
    <property type="evidence" value="ECO:0000314"/>
    <property type="project" value="AgBase"/>
</dbReference>
<dbReference type="GO" id="GO:0016605">
    <property type="term" value="C:PML body"/>
    <property type="evidence" value="ECO:0007669"/>
    <property type="project" value="UniProtKB-SubCell"/>
</dbReference>
<dbReference type="GO" id="GO:0036310">
    <property type="term" value="F:ATP-dependent DNA/DNA annealing activity"/>
    <property type="evidence" value="ECO:0000250"/>
    <property type="project" value="UniProtKB"/>
</dbReference>
<dbReference type="GO" id="GO:0005507">
    <property type="term" value="F:copper ion binding"/>
    <property type="evidence" value="ECO:0000250"/>
    <property type="project" value="UniProtKB"/>
</dbReference>
<dbReference type="GO" id="GO:0003677">
    <property type="term" value="F:DNA binding"/>
    <property type="evidence" value="ECO:0000250"/>
    <property type="project" value="UniProtKB"/>
</dbReference>
<dbReference type="GO" id="GO:0000981">
    <property type="term" value="F:DNA-binding transcription factor activity, RNA polymerase II-specific"/>
    <property type="evidence" value="ECO:0000250"/>
    <property type="project" value="UniProtKB"/>
</dbReference>
<dbReference type="GO" id="GO:0140693">
    <property type="term" value="F:molecular condensate scaffold activity"/>
    <property type="evidence" value="ECO:0000250"/>
    <property type="project" value="UniProtKB"/>
</dbReference>
<dbReference type="GO" id="GO:1990841">
    <property type="term" value="F:promoter-specific chromatin binding"/>
    <property type="evidence" value="ECO:0000250"/>
    <property type="project" value="UniProtKB"/>
</dbReference>
<dbReference type="GO" id="GO:0000978">
    <property type="term" value="F:RNA polymerase II cis-regulatory region sequence-specific DNA binding"/>
    <property type="evidence" value="ECO:0000250"/>
    <property type="project" value="UniProtKB"/>
</dbReference>
<dbReference type="GO" id="GO:0090398">
    <property type="term" value="P:cellular senescence"/>
    <property type="evidence" value="ECO:0000250"/>
    <property type="project" value="UniProtKB"/>
</dbReference>
<dbReference type="GO" id="GO:0048512">
    <property type="term" value="P:circadian behavior"/>
    <property type="evidence" value="ECO:0000250"/>
    <property type="project" value="UniProtKB"/>
</dbReference>
<dbReference type="GO" id="GO:0006974">
    <property type="term" value="P:DNA damage response"/>
    <property type="evidence" value="ECO:0000250"/>
    <property type="project" value="UniProtKB"/>
</dbReference>
<dbReference type="GO" id="GO:0043153">
    <property type="term" value="P:entrainment of circadian clock by photoperiod"/>
    <property type="evidence" value="ECO:0000250"/>
    <property type="project" value="UniProtKB"/>
</dbReference>
<dbReference type="GO" id="GO:0030308">
    <property type="term" value="P:negative regulation of cell growth"/>
    <property type="evidence" value="ECO:0000250"/>
    <property type="project" value="UniProtKB"/>
</dbReference>
<dbReference type="GO" id="GO:0045892">
    <property type="term" value="P:negative regulation of DNA-templated transcription"/>
    <property type="evidence" value="ECO:0000250"/>
    <property type="project" value="UniProtKB"/>
</dbReference>
<dbReference type="GO" id="GO:2000871">
    <property type="term" value="P:negative regulation of progesterone secretion"/>
    <property type="evidence" value="ECO:0000315"/>
    <property type="project" value="AgBase"/>
</dbReference>
<dbReference type="GO" id="GO:0006289">
    <property type="term" value="P:nucleotide-excision repair"/>
    <property type="evidence" value="ECO:0000250"/>
    <property type="project" value="UniProtKB"/>
</dbReference>
<dbReference type="GO" id="GO:0097252">
    <property type="term" value="P:oligodendrocyte apoptotic process"/>
    <property type="evidence" value="ECO:0000250"/>
    <property type="project" value="UniProtKB"/>
</dbReference>
<dbReference type="GO" id="GO:0043065">
    <property type="term" value="P:positive regulation of apoptotic process"/>
    <property type="evidence" value="ECO:0000250"/>
    <property type="project" value="UniProtKB"/>
</dbReference>
<dbReference type="GO" id="GO:2001244">
    <property type="term" value="P:positive regulation of intrinsic apoptotic signaling pathway"/>
    <property type="evidence" value="ECO:0000250"/>
    <property type="project" value="UniProtKB"/>
</dbReference>
<dbReference type="GO" id="GO:0045944">
    <property type="term" value="P:positive regulation of transcription by RNA polymerase II"/>
    <property type="evidence" value="ECO:0000250"/>
    <property type="project" value="UniProtKB"/>
</dbReference>
<dbReference type="GO" id="GO:0051262">
    <property type="term" value="P:protein tetramerization"/>
    <property type="evidence" value="ECO:0007669"/>
    <property type="project" value="InterPro"/>
</dbReference>
<dbReference type="GO" id="GO:0090276">
    <property type="term" value="P:regulation of peptide hormone secretion"/>
    <property type="evidence" value="ECO:0000315"/>
    <property type="project" value="AgBase"/>
</dbReference>
<dbReference type="GO" id="GO:0032306">
    <property type="term" value="P:regulation of prostaglandin secretion"/>
    <property type="evidence" value="ECO:0000315"/>
    <property type="project" value="AgBase"/>
</dbReference>
<dbReference type="GO" id="GO:0006357">
    <property type="term" value="P:regulation of transcription by RNA polymerase II"/>
    <property type="evidence" value="ECO:0000318"/>
    <property type="project" value="GO_Central"/>
</dbReference>
<dbReference type="CDD" id="cd08367">
    <property type="entry name" value="P53"/>
    <property type="match status" value="1"/>
</dbReference>
<dbReference type="FunFam" id="2.60.40.720:FF:000003">
    <property type="entry name" value="Cellular tumor antigen p53"/>
    <property type="match status" value="1"/>
</dbReference>
<dbReference type="FunFam" id="4.10.170.10:FF:000003">
    <property type="entry name" value="Cellular tumor antigen p53"/>
    <property type="match status" value="1"/>
</dbReference>
<dbReference type="Gene3D" id="2.60.40.720">
    <property type="match status" value="1"/>
</dbReference>
<dbReference type="Gene3D" id="6.10.50.20">
    <property type="match status" value="1"/>
</dbReference>
<dbReference type="Gene3D" id="4.10.170.10">
    <property type="entry name" value="p53-like tetramerisation domain"/>
    <property type="match status" value="1"/>
</dbReference>
<dbReference type="InterPro" id="IPR008967">
    <property type="entry name" value="p53-like_TF_DNA-bd_sf"/>
</dbReference>
<dbReference type="InterPro" id="IPR012346">
    <property type="entry name" value="p53/RUNT-type_TF_DNA-bd_sf"/>
</dbReference>
<dbReference type="InterPro" id="IPR011615">
    <property type="entry name" value="p53_DNA-bd"/>
</dbReference>
<dbReference type="InterPro" id="IPR036674">
    <property type="entry name" value="p53_tetramer_sf"/>
</dbReference>
<dbReference type="InterPro" id="IPR010991">
    <property type="entry name" value="p53_tetrameristn"/>
</dbReference>
<dbReference type="InterPro" id="IPR013872">
    <property type="entry name" value="p53_transactivation_domain"/>
</dbReference>
<dbReference type="InterPro" id="IPR002117">
    <property type="entry name" value="p53_tumour_suppressor"/>
</dbReference>
<dbReference type="PANTHER" id="PTHR11447">
    <property type="entry name" value="CELLULAR TUMOR ANTIGEN P53"/>
    <property type="match status" value="1"/>
</dbReference>
<dbReference type="PANTHER" id="PTHR11447:SF6">
    <property type="entry name" value="CELLULAR TUMOR ANTIGEN P53"/>
    <property type="match status" value="1"/>
</dbReference>
<dbReference type="Pfam" id="PF00870">
    <property type="entry name" value="P53"/>
    <property type="match status" value="1"/>
</dbReference>
<dbReference type="Pfam" id="PF08563">
    <property type="entry name" value="P53_TAD"/>
    <property type="match status" value="1"/>
</dbReference>
<dbReference type="Pfam" id="PF07710">
    <property type="entry name" value="P53_tetramer"/>
    <property type="match status" value="1"/>
</dbReference>
<dbReference type="PRINTS" id="PR00386">
    <property type="entry name" value="P53SUPPRESSR"/>
</dbReference>
<dbReference type="SUPFAM" id="SSF47719">
    <property type="entry name" value="p53 tetramerization domain"/>
    <property type="match status" value="1"/>
</dbReference>
<dbReference type="SUPFAM" id="SSF49417">
    <property type="entry name" value="p53-like transcription factors"/>
    <property type="match status" value="1"/>
</dbReference>
<dbReference type="PROSITE" id="PS00348">
    <property type="entry name" value="P53"/>
    <property type="match status" value="1"/>
</dbReference>
<organism>
    <name type="scientific">Sus scrofa</name>
    <name type="common">Pig</name>
    <dbReference type="NCBI Taxonomy" id="9823"/>
    <lineage>
        <taxon>Eukaryota</taxon>
        <taxon>Metazoa</taxon>
        <taxon>Chordata</taxon>
        <taxon>Craniata</taxon>
        <taxon>Vertebrata</taxon>
        <taxon>Euteleostomi</taxon>
        <taxon>Mammalia</taxon>
        <taxon>Eutheria</taxon>
        <taxon>Laurasiatheria</taxon>
        <taxon>Artiodactyla</taxon>
        <taxon>Suina</taxon>
        <taxon>Suidae</taxon>
        <taxon>Sus</taxon>
    </lineage>
</organism>
<name>P53_PIG</name>
<protein>
    <recommendedName>
        <fullName>Cellular tumor antigen p53</fullName>
    </recommendedName>
    <alternativeName>
        <fullName>Tumor suppressor p53</fullName>
    </alternativeName>
</protein>
<evidence type="ECO:0000250" key="1"/>
<evidence type="ECO:0000250" key="2">
    <source>
        <dbReference type="UniProtKB" id="P02340"/>
    </source>
</evidence>
<evidence type="ECO:0000250" key="3">
    <source>
        <dbReference type="UniProtKB" id="P04637"/>
    </source>
</evidence>
<evidence type="ECO:0000250" key="4">
    <source>
        <dbReference type="UniProtKB" id="P10361"/>
    </source>
</evidence>
<evidence type="ECO:0000256" key="5">
    <source>
        <dbReference type="SAM" id="MobiDB-lite"/>
    </source>
</evidence>
<evidence type="ECO:0000305" key="6"/>
<accession>Q9TUB2</accession>